<name>NSP3_ROTSH</name>
<dbReference type="EMBL" id="DQ838610">
    <property type="protein sequence ID" value="ABG75784.1"/>
    <property type="molecule type" value="Genomic_RNA"/>
</dbReference>
<dbReference type="RefSeq" id="YP_002302220.1">
    <property type="nucleotide sequence ID" value="NC_011501.2"/>
</dbReference>
<dbReference type="SMR" id="A2T3N5"/>
<dbReference type="GeneID" id="7011355"/>
<dbReference type="KEGG" id="vg:7011355"/>
<dbReference type="Proteomes" id="UP000001119">
    <property type="component" value="Genome"/>
</dbReference>
<dbReference type="GO" id="GO:0030430">
    <property type="term" value="C:host cell cytoplasm"/>
    <property type="evidence" value="ECO:0007669"/>
    <property type="project" value="UniProtKB-SubCell"/>
</dbReference>
<dbReference type="GO" id="GO:0003723">
    <property type="term" value="F:RNA binding"/>
    <property type="evidence" value="ECO:0007669"/>
    <property type="project" value="UniProtKB-UniRule"/>
</dbReference>
<dbReference type="GO" id="GO:0006417">
    <property type="term" value="P:regulation of translation"/>
    <property type="evidence" value="ECO:0007669"/>
    <property type="project" value="UniProtKB-UniRule"/>
</dbReference>
<dbReference type="CDD" id="cd20714">
    <property type="entry name" value="NSP3_rotavirus"/>
    <property type="match status" value="1"/>
</dbReference>
<dbReference type="Gene3D" id="3.30.70.1610">
    <property type="match status" value="1"/>
</dbReference>
<dbReference type="Gene3D" id="1.20.5.970">
    <property type="entry name" value="Nonstructural RNA-binding protein"/>
    <property type="match status" value="1"/>
</dbReference>
<dbReference type="Gene3D" id="6.10.280.20">
    <property type="entry name" value="Rotavirus non-structural protein NSP3, N-terminal domain"/>
    <property type="match status" value="1"/>
</dbReference>
<dbReference type="HAMAP" id="MF_04094">
    <property type="entry name" value="ROTA_A_NSP3"/>
    <property type="match status" value="1"/>
</dbReference>
<dbReference type="HAMAP" id="MF_04090">
    <property type="entry name" value="ROTA_NSP3"/>
    <property type="match status" value="1"/>
</dbReference>
<dbReference type="InterPro" id="IPR042519">
    <property type="entry name" value="NSP3_N_rotavirus"/>
</dbReference>
<dbReference type="InterPro" id="IPR036082">
    <property type="entry name" value="NSP3_sf"/>
</dbReference>
<dbReference type="InterPro" id="IPR002873">
    <property type="entry name" value="Rotavirus_NSP3"/>
</dbReference>
<dbReference type="Pfam" id="PF01665">
    <property type="entry name" value="Rota_NSP3"/>
    <property type="match status" value="1"/>
</dbReference>
<dbReference type="SUPFAM" id="SSF69903">
    <property type="entry name" value="NSP3 homodimer"/>
    <property type="match status" value="1"/>
</dbReference>
<dbReference type="SUPFAM" id="SSF58030">
    <property type="entry name" value="Rotavirus nonstructural proteins"/>
    <property type="match status" value="1"/>
</dbReference>
<accession>A2T3N5</accession>
<feature type="chain" id="PRO_0000369445" description="Non-structural protein 3">
    <location>
        <begin position="1"/>
        <end position="315"/>
    </location>
</feature>
<feature type="region of interest" description="RNA-binding" evidence="1">
    <location>
        <begin position="1"/>
        <end position="149"/>
    </location>
</feature>
<feature type="region of interest" description="Dimerization" evidence="1">
    <location>
        <begin position="150"/>
        <end position="206"/>
    </location>
</feature>
<feature type="region of interest" description="Interaction with host ZC3H7B" evidence="1">
    <location>
        <begin position="170"/>
        <end position="234"/>
    </location>
</feature>
<feature type="region of interest" description="Interaction with host EIF4G1" evidence="1">
    <location>
        <begin position="208"/>
        <end position="315"/>
    </location>
</feature>
<feature type="coiled-coil region" evidence="1">
    <location>
        <begin position="166"/>
        <end position="237"/>
    </location>
</feature>
<protein>
    <recommendedName>
        <fullName evidence="1">Non-structural protein 3</fullName>
        <shortName evidence="1">NSP3</shortName>
    </recommendedName>
    <alternativeName>
        <fullName evidence="1">NCVP4</fullName>
    </alternativeName>
    <alternativeName>
        <fullName evidence="1">Non-structural RNA-binding protein 34</fullName>
        <shortName evidence="1">NS34</shortName>
    </alternativeName>
</protein>
<evidence type="ECO:0000255" key="1">
    <source>
        <dbReference type="HAMAP-Rule" id="MF_04094"/>
    </source>
</evidence>
<organism>
    <name type="scientific">Rotavirus A (isolate RVA/Monkey/South Africa/SA11-H96/1958/G3P5B[2])</name>
    <name type="common">RV-A</name>
    <name type="synonym">Simian Agent 11 (isolate SI/South Africa/H96/58)</name>
    <dbReference type="NCBI Taxonomy" id="450149"/>
    <lineage>
        <taxon>Viruses</taxon>
        <taxon>Riboviria</taxon>
        <taxon>Orthornavirae</taxon>
        <taxon>Duplornaviricota</taxon>
        <taxon>Resentoviricetes</taxon>
        <taxon>Reovirales</taxon>
        <taxon>Sedoreoviridae</taxon>
        <taxon>Rotavirus</taxon>
        <taxon>Rotavirus A</taxon>
    </lineage>
</organism>
<organismHost>
    <name type="scientific">Chlorocebus pygerythrus</name>
    <name type="common">Vervet monkey</name>
    <name type="synonym">Cercopithecus pygerythrus</name>
    <dbReference type="NCBI Taxonomy" id="60710"/>
</organismHost>
<comment type="function">
    <text evidence="1">Plays an important role in stimulating the translation of viral mRNAs. These mRNAs are capped but not polyadenylated, instead terminating in a conserved sequence 'GACC' at the 3' that is recognized by NSP3, which competes with host PABPC1 for EIF4G1 binding. The interaction between NSP3 and host EIF4G1 stabilizes the EIF4E-EIF4G1 interaction, thereby facilitating the initiation of capped mRNA translation.</text>
</comment>
<comment type="subunit">
    <text evidence="1">Homodimer. Interacts (via the coiled-coil region) with host ZC3H7B (via LD motif). Interacts with host EIF4G1.</text>
</comment>
<comment type="subcellular location">
    <subcellularLocation>
        <location evidence="1">Host cytoplasm</location>
    </subcellularLocation>
</comment>
<comment type="similarity">
    <text evidence="1">Belongs to the rotavirus NSP3 family.</text>
</comment>
<proteinExistence type="inferred from homology"/>
<keyword id="KW-0175">Coiled coil</keyword>
<keyword id="KW-1035">Host cytoplasm</keyword>
<keyword id="KW-0945">Host-virus interaction</keyword>
<keyword id="KW-1185">Reference proteome</keyword>
<keyword id="KW-0694">RNA-binding</keyword>
<keyword id="KW-0810">Translation regulation</keyword>
<sequence length="315" mass="36425">MLKMESTQQMAVSIINSSFEAAVVAATSALENMGIEYDYQDIYSRVKNKFDFVMDDSGVKNNLIGKAITIDQALNNKFGSAIRNRNWLADTSRAAKLDEDVNKLRMMLSSKGIDQKMRVLNACFSVKRIPGKSSSIIKCTKLMRDKLERGEVEVDDSFVDEKMEVDTIDWKSRYEQLEQRFESLKSRVNEKYNNWVLKARKMNENMHSLQNVISQQQAHIAELQVYNNKLERDLQNKIGSLTSSIEWYLRSMELDPEIKADIEQQINSIDAINPLHAFDDLESVIRNLISDYDKLFLMFKGLIQRCNYQYSFGCE</sequence>
<reference key="1">
    <citation type="journal article" date="2007" name="Virology">
        <title>Genome heterogeneity of SA11 rotavirus due to reassortment with 'O' agent.</title>
        <authorList>
            <person name="Small C."/>
            <person name="Barro M."/>
            <person name="Brown T.L."/>
            <person name="Patton J.T."/>
        </authorList>
    </citation>
    <scope>NUCLEOTIDE SEQUENCE [GENOMIC RNA]</scope>
</reference>